<sequence>MTKNIHDQRILILDFGSQYTQLVARRVREIGVYCELWSWDVEEADIREFNPDGIILSGGPESVTEANSPRAPQYVFDSGVPVFGVCYGMQTMAEQLGGRVATSDEREFGYAQVKISGESALFKDLDLTQDVWMSHGDKVVEIPADFVKIGETDTCPYAAMANEEKKYYGVQFHPEVTHTKNGLQMLENFVLGVCGCERLWTSESIIEDAVARIKEQVGNDEVILGLSGGVDSSVVAMLVHRAIGSKLTCVFVDNGLLRLNEGEQVMEMFGDKFGLNIIKVDAEERFLKALEGIDEPEAKRKTIGRVFVEVFDEESKKLSNAKWLAQGTIYPDVIESAASKTGKAHVIKSHHNVGGLPDDMKMGLVEPLRELFKDEVRKIGLELGLPYNMLYRHPFPGPGLGVRVLGEVKKEYCDLLRRADAIFIEELHAADLYNKVSQAFTVFLPVRSVGVMGDGRKYDWVVSLRAVETIDFMTAHWAHLPYEFLGKVSNRIINEVNGISRVVYDISGKPPATIEWE</sequence>
<gene>
    <name type="primary">guaA</name>
    <name type="ordered locus">VC_0768</name>
</gene>
<proteinExistence type="inferred from homology"/>
<dbReference type="EC" id="6.3.5.2"/>
<dbReference type="EMBL" id="AE003852">
    <property type="protein sequence ID" value="AAF93933.1"/>
    <property type="molecule type" value="Genomic_DNA"/>
</dbReference>
<dbReference type="PIR" id="D82282">
    <property type="entry name" value="D82282"/>
</dbReference>
<dbReference type="RefSeq" id="NP_230417.1">
    <property type="nucleotide sequence ID" value="NC_002505.1"/>
</dbReference>
<dbReference type="RefSeq" id="WP_000164597.1">
    <property type="nucleotide sequence ID" value="NZ_LT906614.1"/>
</dbReference>
<dbReference type="SMR" id="Q9KTW2"/>
<dbReference type="STRING" id="243277.VC_0768"/>
<dbReference type="MEROPS" id="C26.957"/>
<dbReference type="DNASU" id="2615311"/>
<dbReference type="EnsemblBacteria" id="AAF93933">
    <property type="protein sequence ID" value="AAF93933"/>
    <property type="gene ID" value="VC_0768"/>
</dbReference>
<dbReference type="KEGG" id="vch:VC_0768"/>
<dbReference type="PATRIC" id="fig|243277.26.peg.732"/>
<dbReference type="eggNOG" id="COG0518">
    <property type="taxonomic scope" value="Bacteria"/>
</dbReference>
<dbReference type="eggNOG" id="COG0519">
    <property type="taxonomic scope" value="Bacteria"/>
</dbReference>
<dbReference type="HOGENOM" id="CLU_014340_0_5_6"/>
<dbReference type="UniPathway" id="UPA00189">
    <property type="reaction ID" value="UER00296"/>
</dbReference>
<dbReference type="Proteomes" id="UP000000584">
    <property type="component" value="Chromosome 1"/>
</dbReference>
<dbReference type="GO" id="GO:0005829">
    <property type="term" value="C:cytosol"/>
    <property type="evidence" value="ECO:0000318"/>
    <property type="project" value="GO_Central"/>
</dbReference>
<dbReference type="GO" id="GO:0005524">
    <property type="term" value="F:ATP binding"/>
    <property type="evidence" value="ECO:0007669"/>
    <property type="project" value="UniProtKB-UniRule"/>
</dbReference>
<dbReference type="GO" id="GO:0003921">
    <property type="term" value="F:GMP synthase activity"/>
    <property type="evidence" value="ECO:0000318"/>
    <property type="project" value="GO_Central"/>
</dbReference>
<dbReference type="GO" id="GO:0006177">
    <property type="term" value="P:GMP biosynthetic process"/>
    <property type="evidence" value="ECO:0000318"/>
    <property type="project" value="GO_Central"/>
</dbReference>
<dbReference type="CDD" id="cd01742">
    <property type="entry name" value="GATase1_GMP_Synthase"/>
    <property type="match status" value="1"/>
</dbReference>
<dbReference type="CDD" id="cd01997">
    <property type="entry name" value="GMP_synthase_C"/>
    <property type="match status" value="1"/>
</dbReference>
<dbReference type="FunFam" id="3.30.300.10:FF:000002">
    <property type="entry name" value="GMP synthase [glutamine-hydrolyzing]"/>
    <property type="match status" value="1"/>
</dbReference>
<dbReference type="FunFam" id="3.40.50.620:FF:000001">
    <property type="entry name" value="GMP synthase [glutamine-hydrolyzing]"/>
    <property type="match status" value="1"/>
</dbReference>
<dbReference type="FunFam" id="3.40.50.880:FF:000001">
    <property type="entry name" value="GMP synthase [glutamine-hydrolyzing]"/>
    <property type="match status" value="1"/>
</dbReference>
<dbReference type="Gene3D" id="3.30.300.10">
    <property type="match status" value="1"/>
</dbReference>
<dbReference type="Gene3D" id="3.40.50.880">
    <property type="match status" value="1"/>
</dbReference>
<dbReference type="Gene3D" id="3.40.50.620">
    <property type="entry name" value="HUPs"/>
    <property type="match status" value="1"/>
</dbReference>
<dbReference type="HAMAP" id="MF_00344">
    <property type="entry name" value="GMP_synthase"/>
    <property type="match status" value="1"/>
</dbReference>
<dbReference type="InterPro" id="IPR029062">
    <property type="entry name" value="Class_I_gatase-like"/>
</dbReference>
<dbReference type="InterPro" id="IPR017926">
    <property type="entry name" value="GATASE"/>
</dbReference>
<dbReference type="InterPro" id="IPR001674">
    <property type="entry name" value="GMP_synth_C"/>
</dbReference>
<dbReference type="InterPro" id="IPR004739">
    <property type="entry name" value="GMP_synth_GATase"/>
</dbReference>
<dbReference type="InterPro" id="IPR022955">
    <property type="entry name" value="GMP_synthase"/>
</dbReference>
<dbReference type="InterPro" id="IPR025777">
    <property type="entry name" value="GMPS_ATP_PPase_dom"/>
</dbReference>
<dbReference type="InterPro" id="IPR022310">
    <property type="entry name" value="NAD/GMP_synthase"/>
</dbReference>
<dbReference type="InterPro" id="IPR014729">
    <property type="entry name" value="Rossmann-like_a/b/a_fold"/>
</dbReference>
<dbReference type="NCBIfam" id="TIGR00884">
    <property type="entry name" value="guaA_Cterm"/>
    <property type="match status" value="1"/>
</dbReference>
<dbReference type="NCBIfam" id="TIGR00888">
    <property type="entry name" value="guaA_Nterm"/>
    <property type="match status" value="1"/>
</dbReference>
<dbReference type="NCBIfam" id="NF000848">
    <property type="entry name" value="PRK00074.1"/>
    <property type="match status" value="1"/>
</dbReference>
<dbReference type="PANTHER" id="PTHR11922:SF2">
    <property type="entry name" value="GMP SYNTHASE [GLUTAMINE-HYDROLYZING]"/>
    <property type="match status" value="1"/>
</dbReference>
<dbReference type="PANTHER" id="PTHR11922">
    <property type="entry name" value="GMP SYNTHASE-RELATED"/>
    <property type="match status" value="1"/>
</dbReference>
<dbReference type="Pfam" id="PF00117">
    <property type="entry name" value="GATase"/>
    <property type="match status" value="1"/>
</dbReference>
<dbReference type="Pfam" id="PF00958">
    <property type="entry name" value="GMP_synt_C"/>
    <property type="match status" value="1"/>
</dbReference>
<dbReference type="Pfam" id="PF02540">
    <property type="entry name" value="NAD_synthase"/>
    <property type="match status" value="1"/>
</dbReference>
<dbReference type="PRINTS" id="PR00097">
    <property type="entry name" value="ANTSNTHASEII"/>
</dbReference>
<dbReference type="PRINTS" id="PR00099">
    <property type="entry name" value="CPSGATASE"/>
</dbReference>
<dbReference type="PRINTS" id="PR00096">
    <property type="entry name" value="GATASE"/>
</dbReference>
<dbReference type="SUPFAM" id="SSF52402">
    <property type="entry name" value="Adenine nucleotide alpha hydrolases-like"/>
    <property type="match status" value="1"/>
</dbReference>
<dbReference type="SUPFAM" id="SSF52317">
    <property type="entry name" value="Class I glutamine amidotransferase-like"/>
    <property type="match status" value="1"/>
</dbReference>
<dbReference type="SUPFAM" id="SSF54810">
    <property type="entry name" value="GMP synthetase C-terminal dimerisation domain"/>
    <property type="match status" value="1"/>
</dbReference>
<dbReference type="PROSITE" id="PS51273">
    <property type="entry name" value="GATASE_TYPE_1"/>
    <property type="match status" value="1"/>
</dbReference>
<dbReference type="PROSITE" id="PS51553">
    <property type="entry name" value="GMPS_ATP_PPASE"/>
    <property type="match status" value="1"/>
</dbReference>
<feature type="chain" id="PRO_0000140203" description="GMP synthase [glutamine-hydrolyzing]">
    <location>
        <begin position="1"/>
        <end position="517"/>
    </location>
</feature>
<feature type="domain" description="Glutamine amidotransferase type-1">
    <location>
        <begin position="9"/>
        <end position="199"/>
    </location>
</feature>
<feature type="domain" description="GMPS ATP-PPase">
    <location>
        <begin position="200"/>
        <end position="392"/>
    </location>
</feature>
<feature type="active site" description="Nucleophile" evidence="1">
    <location>
        <position position="86"/>
    </location>
</feature>
<feature type="active site" evidence="1">
    <location>
        <position position="173"/>
    </location>
</feature>
<feature type="active site" evidence="1">
    <location>
        <position position="175"/>
    </location>
</feature>
<feature type="binding site" evidence="1">
    <location>
        <begin position="227"/>
        <end position="233"/>
    </location>
    <ligand>
        <name>ATP</name>
        <dbReference type="ChEBI" id="CHEBI:30616"/>
    </ligand>
</feature>
<reference key="1">
    <citation type="journal article" date="2000" name="Nature">
        <title>DNA sequence of both chromosomes of the cholera pathogen Vibrio cholerae.</title>
        <authorList>
            <person name="Heidelberg J.F."/>
            <person name="Eisen J.A."/>
            <person name="Nelson W.C."/>
            <person name="Clayton R.A."/>
            <person name="Gwinn M.L."/>
            <person name="Dodson R.J."/>
            <person name="Haft D.H."/>
            <person name="Hickey E.K."/>
            <person name="Peterson J.D."/>
            <person name="Umayam L.A."/>
            <person name="Gill S.R."/>
            <person name="Nelson K.E."/>
            <person name="Read T.D."/>
            <person name="Tettelin H."/>
            <person name="Richardson D.L."/>
            <person name="Ermolaeva M.D."/>
            <person name="Vamathevan J.J."/>
            <person name="Bass S."/>
            <person name="Qin H."/>
            <person name="Dragoi I."/>
            <person name="Sellers P."/>
            <person name="McDonald L.A."/>
            <person name="Utterback T.R."/>
            <person name="Fleischmann R.D."/>
            <person name="Nierman W.C."/>
            <person name="White O."/>
            <person name="Salzberg S.L."/>
            <person name="Smith H.O."/>
            <person name="Colwell R.R."/>
            <person name="Mekalanos J.J."/>
            <person name="Venter J.C."/>
            <person name="Fraser C.M."/>
        </authorList>
    </citation>
    <scope>NUCLEOTIDE SEQUENCE [LARGE SCALE GENOMIC DNA]</scope>
    <source>
        <strain>ATCC 39315 / El Tor Inaba N16961</strain>
    </source>
</reference>
<evidence type="ECO:0000250" key="1"/>
<organism>
    <name type="scientific">Vibrio cholerae serotype O1 (strain ATCC 39315 / El Tor Inaba N16961)</name>
    <dbReference type="NCBI Taxonomy" id="243277"/>
    <lineage>
        <taxon>Bacteria</taxon>
        <taxon>Pseudomonadati</taxon>
        <taxon>Pseudomonadota</taxon>
        <taxon>Gammaproteobacteria</taxon>
        <taxon>Vibrionales</taxon>
        <taxon>Vibrionaceae</taxon>
        <taxon>Vibrio</taxon>
    </lineage>
</organism>
<keyword id="KW-0067">ATP-binding</keyword>
<keyword id="KW-0315">Glutamine amidotransferase</keyword>
<keyword id="KW-0332">GMP biosynthesis</keyword>
<keyword id="KW-0436">Ligase</keyword>
<keyword id="KW-0547">Nucleotide-binding</keyword>
<keyword id="KW-0658">Purine biosynthesis</keyword>
<keyword id="KW-1185">Reference proteome</keyword>
<protein>
    <recommendedName>
        <fullName>GMP synthase [glutamine-hydrolyzing]</fullName>
        <ecNumber>6.3.5.2</ecNumber>
    </recommendedName>
    <alternativeName>
        <fullName>GMP synthetase</fullName>
    </alternativeName>
    <alternativeName>
        <fullName>Glutamine amidotransferase</fullName>
    </alternativeName>
</protein>
<name>GUAA_VIBCH</name>
<accession>Q9KTW2</accession>
<comment type="function">
    <text evidence="1">Catalyzes the synthesis of GMP from XMP.</text>
</comment>
<comment type="catalytic activity">
    <reaction>
        <text>XMP + L-glutamine + ATP + H2O = GMP + L-glutamate + AMP + diphosphate + 2 H(+)</text>
        <dbReference type="Rhea" id="RHEA:11680"/>
        <dbReference type="ChEBI" id="CHEBI:15377"/>
        <dbReference type="ChEBI" id="CHEBI:15378"/>
        <dbReference type="ChEBI" id="CHEBI:29985"/>
        <dbReference type="ChEBI" id="CHEBI:30616"/>
        <dbReference type="ChEBI" id="CHEBI:33019"/>
        <dbReference type="ChEBI" id="CHEBI:57464"/>
        <dbReference type="ChEBI" id="CHEBI:58115"/>
        <dbReference type="ChEBI" id="CHEBI:58359"/>
        <dbReference type="ChEBI" id="CHEBI:456215"/>
        <dbReference type="EC" id="6.3.5.2"/>
    </reaction>
</comment>
<comment type="pathway">
    <text>Purine metabolism; GMP biosynthesis; GMP from XMP (L-Gln route): step 1/1.</text>
</comment>
<comment type="subunit">
    <text evidence="1">Homodimer.</text>
</comment>